<proteinExistence type="evidence at protein level"/>
<evidence type="ECO:0000255" key="1">
    <source>
        <dbReference type="HAMAP-Rule" id="MF_01342"/>
    </source>
</evidence>
<evidence type="ECO:0000256" key="2">
    <source>
        <dbReference type="SAM" id="MobiDB-lite"/>
    </source>
</evidence>
<evidence type="ECO:0000305" key="3"/>
<evidence type="ECO:0007829" key="4">
    <source>
        <dbReference type="PDB" id="8FN2"/>
    </source>
</evidence>
<sequence>MLSPKKVKYRKKQRGRLSGEAQKGNKISFGEYGLVSLETNFITARQIEAARIAMTRKIKRGGRVWIRIFPDIPYTKKPAETRMGKGKGGVDHWNAPVKLGTVMFEMSGVVEELAQEAMSLASSKLPVKTMFVVRRDLR</sequence>
<name>RL16_BORBU</name>
<feature type="chain" id="PRO_0000062057" description="Large ribosomal subunit protein uL16">
    <location>
        <begin position="1"/>
        <end position="138"/>
    </location>
</feature>
<feature type="region of interest" description="Disordered" evidence="2">
    <location>
        <begin position="1"/>
        <end position="21"/>
    </location>
</feature>
<feature type="compositionally biased region" description="Basic residues" evidence="2">
    <location>
        <begin position="1"/>
        <end position="15"/>
    </location>
</feature>
<feature type="strand" evidence="4">
    <location>
        <begin position="22"/>
        <end position="24"/>
    </location>
</feature>
<feature type="strand" evidence="4">
    <location>
        <begin position="29"/>
        <end position="38"/>
    </location>
</feature>
<feature type="strand" evidence="4">
    <location>
        <begin position="40"/>
        <end position="43"/>
    </location>
</feature>
<feature type="helix" evidence="4">
    <location>
        <begin position="44"/>
        <end position="57"/>
    </location>
</feature>
<feature type="strand" evidence="4">
    <location>
        <begin position="60"/>
        <end position="65"/>
    </location>
</feature>
<feature type="strand" evidence="4">
    <location>
        <begin position="72"/>
        <end position="75"/>
    </location>
</feature>
<feature type="strand" evidence="4">
    <location>
        <begin position="90"/>
        <end position="97"/>
    </location>
</feature>
<feature type="strand" evidence="4">
    <location>
        <begin position="105"/>
        <end position="109"/>
    </location>
</feature>
<feature type="helix" evidence="4">
    <location>
        <begin position="111"/>
        <end position="122"/>
    </location>
</feature>
<feature type="strand" evidence="4">
    <location>
        <begin position="125"/>
        <end position="127"/>
    </location>
</feature>
<feature type="strand" evidence="4">
    <location>
        <begin position="129"/>
        <end position="133"/>
    </location>
</feature>
<reference key="1">
    <citation type="journal article" date="1997" name="Nature">
        <title>Genomic sequence of a Lyme disease spirochaete, Borrelia burgdorferi.</title>
        <authorList>
            <person name="Fraser C.M."/>
            <person name="Casjens S."/>
            <person name="Huang W.M."/>
            <person name="Sutton G.G."/>
            <person name="Clayton R.A."/>
            <person name="Lathigra R."/>
            <person name="White O."/>
            <person name="Ketchum K.A."/>
            <person name="Dodson R.J."/>
            <person name="Hickey E.K."/>
            <person name="Gwinn M.L."/>
            <person name="Dougherty B.A."/>
            <person name="Tomb J.-F."/>
            <person name="Fleischmann R.D."/>
            <person name="Richardson D.L."/>
            <person name="Peterson J.D."/>
            <person name="Kerlavage A.R."/>
            <person name="Quackenbush J."/>
            <person name="Salzberg S.L."/>
            <person name="Hanson M."/>
            <person name="van Vugt R."/>
            <person name="Palmer N."/>
            <person name="Adams M.D."/>
            <person name="Gocayne J.D."/>
            <person name="Weidman J.F."/>
            <person name="Utterback T.R."/>
            <person name="Watthey L."/>
            <person name="McDonald L.A."/>
            <person name="Artiach P."/>
            <person name="Bowman C."/>
            <person name="Garland S.A."/>
            <person name="Fujii C."/>
            <person name="Cotton M.D."/>
            <person name="Horst K."/>
            <person name="Roberts K.M."/>
            <person name="Hatch B."/>
            <person name="Smith H.O."/>
            <person name="Venter J.C."/>
        </authorList>
    </citation>
    <scope>NUCLEOTIDE SEQUENCE [LARGE SCALE GENOMIC DNA]</scope>
    <source>
        <strain>ATCC 35210 / DSM 4680 / CIP 102532 / B31</strain>
    </source>
</reference>
<accession>O51438</accession>
<dbReference type="EMBL" id="AE000783">
    <property type="protein sequence ID" value="AAC66857.1"/>
    <property type="molecule type" value="Genomic_DNA"/>
</dbReference>
<dbReference type="PIR" id="D70160">
    <property type="entry name" value="D70160"/>
</dbReference>
<dbReference type="RefSeq" id="NP_212619.1">
    <property type="nucleotide sequence ID" value="NC_001318.1"/>
</dbReference>
<dbReference type="RefSeq" id="WP_002656214.1">
    <property type="nucleotide sequence ID" value="NC_001318.1"/>
</dbReference>
<dbReference type="PDB" id="8FMW">
    <property type="method" value="EM"/>
    <property type="resolution" value="2.86 A"/>
    <property type="chains" value="AO=1-138"/>
</dbReference>
<dbReference type="PDB" id="8FN2">
    <property type="method" value="EM"/>
    <property type="resolution" value="3.40 A"/>
    <property type="chains" value="O=1-138"/>
</dbReference>
<dbReference type="PDBsum" id="8FMW"/>
<dbReference type="PDBsum" id="8FN2"/>
<dbReference type="EMDB" id="EMD-29298"/>
<dbReference type="EMDB" id="EMD-29304"/>
<dbReference type="SMR" id="O51438"/>
<dbReference type="STRING" id="224326.BB_0485"/>
<dbReference type="PaxDb" id="224326-BB_0485"/>
<dbReference type="EnsemblBacteria" id="AAC66857">
    <property type="protein sequence ID" value="AAC66857"/>
    <property type="gene ID" value="BB_0485"/>
</dbReference>
<dbReference type="KEGG" id="bbu:BB_0485"/>
<dbReference type="PATRIC" id="fig|224326.49.peg.876"/>
<dbReference type="HOGENOM" id="CLU_078858_2_1_12"/>
<dbReference type="OrthoDB" id="9802589at2"/>
<dbReference type="Proteomes" id="UP000001807">
    <property type="component" value="Chromosome"/>
</dbReference>
<dbReference type="GO" id="GO:0022625">
    <property type="term" value="C:cytosolic large ribosomal subunit"/>
    <property type="evidence" value="ECO:0007669"/>
    <property type="project" value="TreeGrafter"/>
</dbReference>
<dbReference type="GO" id="GO:0019843">
    <property type="term" value="F:rRNA binding"/>
    <property type="evidence" value="ECO:0007669"/>
    <property type="project" value="UniProtKB-UniRule"/>
</dbReference>
<dbReference type="GO" id="GO:0003735">
    <property type="term" value="F:structural constituent of ribosome"/>
    <property type="evidence" value="ECO:0007669"/>
    <property type="project" value="InterPro"/>
</dbReference>
<dbReference type="GO" id="GO:0000049">
    <property type="term" value="F:tRNA binding"/>
    <property type="evidence" value="ECO:0007669"/>
    <property type="project" value="UniProtKB-KW"/>
</dbReference>
<dbReference type="GO" id="GO:0006412">
    <property type="term" value="P:translation"/>
    <property type="evidence" value="ECO:0007669"/>
    <property type="project" value="UniProtKB-UniRule"/>
</dbReference>
<dbReference type="CDD" id="cd01433">
    <property type="entry name" value="Ribosomal_L16_L10e"/>
    <property type="match status" value="1"/>
</dbReference>
<dbReference type="FunFam" id="3.90.1170.10:FF:000001">
    <property type="entry name" value="50S ribosomal protein L16"/>
    <property type="match status" value="1"/>
</dbReference>
<dbReference type="Gene3D" id="3.90.1170.10">
    <property type="entry name" value="Ribosomal protein L10e/L16"/>
    <property type="match status" value="1"/>
</dbReference>
<dbReference type="HAMAP" id="MF_01342">
    <property type="entry name" value="Ribosomal_uL16"/>
    <property type="match status" value="1"/>
</dbReference>
<dbReference type="InterPro" id="IPR047873">
    <property type="entry name" value="Ribosomal_uL16"/>
</dbReference>
<dbReference type="InterPro" id="IPR000114">
    <property type="entry name" value="Ribosomal_uL16_bact-type"/>
</dbReference>
<dbReference type="InterPro" id="IPR020798">
    <property type="entry name" value="Ribosomal_uL16_CS"/>
</dbReference>
<dbReference type="InterPro" id="IPR016180">
    <property type="entry name" value="Ribosomal_uL16_dom"/>
</dbReference>
<dbReference type="InterPro" id="IPR036920">
    <property type="entry name" value="Ribosomal_uL16_sf"/>
</dbReference>
<dbReference type="NCBIfam" id="TIGR01164">
    <property type="entry name" value="rplP_bact"/>
    <property type="match status" value="1"/>
</dbReference>
<dbReference type="PANTHER" id="PTHR12220">
    <property type="entry name" value="50S/60S RIBOSOMAL PROTEIN L16"/>
    <property type="match status" value="1"/>
</dbReference>
<dbReference type="PANTHER" id="PTHR12220:SF13">
    <property type="entry name" value="LARGE RIBOSOMAL SUBUNIT PROTEIN UL16M"/>
    <property type="match status" value="1"/>
</dbReference>
<dbReference type="Pfam" id="PF00252">
    <property type="entry name" value="Ribosomal_L16"/>
    <property type="match status" value="1"/>
</dbReference>
<dbReference type="PRINTS" id="PR00060">
    <property type="entry name" value="RIBOSOMALL16"/>
</dbReference>
<dbReference type="SUPFAM" id="SSF54686">
    <property type="entry name" value="Ribosomal protein L16p/L10e"/>
    <property type="match status" value="1"/>
</dbReference>
<dbReference type="PROSITE" id="PS00586">
    <property type="entry name" value="RIBOSOMAL_L16_1"/>
    <property type="match status" value="1"/>
</dbReference>
<dbReference type="PROSITE" id="PS00701">
    <property type="entry name" value="RIBOSOMAL_L16_2"/>
    <property type="match status" value="1"/>
</dbReference>
<comment type="function">
    <text evidence="1">Binds 23S rRNA and is also seen to make contacts with the A and possibly P site tRNAs.</text>
</comment>
<comment type="subunit">
    <text evidence="1">Part of the 50S ribosomal subunit.</text>
</comment>
<comment type="similarity">
    <text evidence="1">Belongs to the universal ribosomal protein uL16 family.</text>
</comment>
<keyword id="KW-0002">3D-structure</keyword>
<keyword id="KW-1185">Reference proteome</keyword>
<keyword id="KW-0687">Ribonucleoprotein</keyword>
<keyword id="KW-0689">Ribosomal protein</keyword>
<keyword id="KW-0694">RNA-binding</keyword>
<keyword id="KW-0699">rRNA-binding</keyword>
<keyword id="KW-0820">tRNA-binding</keyword>
<gene>
    <name evidence="1" type="primary">rplP</name>
    <name type="ordered locus">BB_0485</name>
</gene>
<organism>
    <name type="scientific">Borreliella burgdorferi (strain ATCC 35210 / DSM 4680 / CIP 102532 / B31)</name>
    <name type="common">Borrelia burgdorferi</name>
    <dbReference type="NCBI Taxonomy" id="224326"/>
    <lineage>
        <taxon>Bacteria</taxon>
        <taxon>Pseudomonadati</taxon>
        <taxon>Spirochaetota</taxon>
        <taxon>Spirochaetia</taxon>
        <taxon>Spirochaetales</taxon>
        <taxon>Borreliaceae</taxon>
        <taxon>Borreliella</taxon>
    </lineage>
</organism>
<protein>
    <recommendedName>
        <fullName evidence="1">Large ribosomal subunit protein uL16</fullName>
    </recommendedName>
    <alternativeName>
        <fullName evidence="3">50S ribosomal protein L16</fullName>
    </alternativeName>
</protein>